<evidence type="ECO:0000250" key="1"/>
<evidence type="ECO:0000250" key="2">
    <source>
        <dbReference type="UniProtKB" id="P27694"/>
    </source>
</evidence>
<evidence type="ECO:0000255" key="3"/>
<evidence type="ECO:0000256" key="4">
    <source>
        <dbReference type="SAM" id="MobiDB-lite"/>
    </source>
</evidence>
<evidence type="ECO:0000269" key="5">
    <source>
    </source>
</evidence>
<evidence type="ECO:0000305" key="6"/>
<evidence type="ECO:0000312" key="7">
    <source>
        <dbReference type="FlyBase" id="FBgn0010173"/>
    </source>
</evidence>
<proteinExistence type="evidence at protein level"/>
<organism>
    <name type="scientific">Drosophila melanogaster</name>
    <name type="common">Fruit fly</name>
    <dbReference type="NCBI Taxonomy" id="7227"/>
    <lineage>
        <taxon>Eukaryota</taxon>
        <taxon>Metazoa</taxon>
        <taxon>Ecdysozoa</taxon>
        <taxon>Arthropoda</taxon>
        <taxon>Hexapoda</taxon>
        <taxon>Insecta</taxon>
        <taxon>Pterygota</taxon>
        <taxon>Neoptera</taxon>
        <taxon>Endopterygota</taxon>
        <taxon>Diptera</taxon>
        <taxon>Brachycera</taxon>
        <taxon>Muscomorpha</taxon>
        <taxon>Ephydroidea</taxon>
        <taxon>Drosophilidae</taxon>
        <taxon>Drosophila</taxon>
        <taxon>Sophophora</taxon>
    </lineage>
</organism>
<gene>
    <name evidence="7" type="primary">RPA1</name>
    <name evidence="7" type="ORF">CG9633</name>
</gene>
<comment type="function">
    <text evidence="2">As part of the heterotrimeric replication protein A complex (RPA/RP-A), binds and stabilizes single-stranded DNA intermediates, that form during DNA replication or upon DNA stress. It prevents their reannealing and in parallel, recruits and activates different proteins and complexes involved in DNA metabolism. Thereby, it plays an essential role both in DNA replication and the cellular response to DNA damage.</text>
</comment>
<comment type="subunit">
    <text evidence="1">Component of the heterotrimeric canonical replication protein A complex (RPA).</text>
</comment>
<comment type="subcellular location">
    <subcellularLocation>
        <location>Nucleus</location>
    </subcellularLocation>
</comment>
<comment type="similarity">
    <text evidence="6">Belongs to the replication factor A protein 1 family.</text>
</comment>
<protein>
    <recommendedName>
        <fullName>Replication protein A 70 kDa DNA-binding subunit</fullName>
        <shortName>RP-A p70</shortName>
    </recommendedName>
    <alternativeName>
        <fullName>Replication factor A protein 1</fullName>
        <shortName>RF-A protein 1</shortName>
    </alternativeName>
    <alternativeName>
        <fullName>Single-stranded DNA-binding protein</fullName>
        <shortName>DmRPA1</shortName>
    </alternativeName>
</protein>
<accession>Q24492</accession>
<accession>Q9VHU3</accession>
<feature type="chain" id="PRO_0000097259" description="Replication protein A 70 kDa DNA-binding subunit">
    <location>
        <begin position="1"/>
        <end position="603"/>
    </location>
</feature>
<feature type="DNA-binding region" description="OB">
    <location>
        <begin position="179"/>
        <end position="252"/>
    </location>
</feature>
<feature type="zinc finger region" description="C4-type" evidence="3">
    <location>
        <begin position="464"/>
        <end position="486"/>
    </location>
</feature>
<feature type="region of interest" description="Disordered" evidence="4">
    <location>
        <begin position="131"/>
        <end position="152"/>
    </location>
</feature>
<feature type="modified residue" description="Phosphoserine" evidence="5">
    <location>
        <position position="160"/>
    </location>
</feature>
<feature type="modified residue" description="Phosphoserine" evidence="5">
    <location>
        <position position="420"/>
    </location>
</feature>
<keyword id="KW-0235">DNA replication</keyword>
<keyword id="KW-0238">DNA-binding</keyword>
<keyword id="KW-0479">Metal-binding</keyword>
<keyword id="KW-0539">Nucleus</keyword>
<keyword id="KW-0597">Phosphoprotein</keyword>
<keyword id="KW-1185">Reference proteome</keyword>
<keyword id="KW-0862">Zinc</keyword>
<keyword id="KW-0863">Zinc-finger</keyword>
<dbReference type="EMBL" id="Z70277">
    <property type="protein sequence ID" value="CAA94241.1"/>
    <property type="molecule type" value="mRNA"/>
</dbReference>
<dbReference type="EMBL" id="AE014297">
    <property type="protein sequence ID" value="AAF54206.1"/>
    <property type="molecule type" value="Genomic_DNA"/>
</dbReference>
<dbReference type="EMBL" id="AY069331">
    <property type="protein sequence ID" value="AAL39476.1"/>
    <property type="molecule type" value="mRNA"/>
</dbReference>
<dbReference type="RefSeq" id="NP_524274.1">
    <property type="nucleotide sequence ID" value="NM_079550.4"/>
</dbReference>
<dbReference type="SMR" id="Q24492"/>
<dbReference type="BioGRID" id="66153">
    <property type="interactions" value="19"/>
</dbReference>
<dbReference type="DIP" id="DIP-22335N"/>
<dbReference type="FunCoup" id="Q24492">
    <property type="interactions" value="2494"/>
</dbReference>
<dbReference type="IntAct" id="Q24492">
    <property type="interactions" value="9"/>
</dbReference>
<dbReference type="STRING" id="7227.FBpp0081356"/>
<dbReference type="iPTMnet" id="Q24492"/>
<dbReference type="PaxDb" id="7227-FBpp0081356"/>
<dbReference type="EnsemblMetazoa" id="FBtr0081867">
    <property type="protein sequence ID" value="FBpp0081356"/>
    <property type="gene ID" value="FBgn0010173"/>
</dbReference>
<dbReference type="GeneID" id="40972"/>
<dbReference type="KEGG" id="dme:Dmel_CG9633"/>
<dbReference type="AGR" id="FB:FBgn0010173"/>
<dbReference type="CTD" id="6117"/>
<dbReference type="FlyBase" id="FBgn0010173">
    <property type="gene designation" value="RPA1"/>
</dbReference>
<dbReference type="VEuPathDB" id="VectorBase:FBgn0010173"/>
<dbReference type="eggNOG" id="KOG0851">
    <property type="taxonomic scope" value="Eukaryota"/>
</dbReference>
<dbReference type="GeneTree" id="ENSGT00390000012403"/>
<dbReference type="HOGENOM" id="CLU_012393_2_1_1"/>
<dbReference type="InParanoid" id="Q24492"/>
<dbReference type="OMA" id="FNSYAML"/>
<dbReference type="OrthoDB" id="1751331at2759"/>
<dbReference type="PhylomeDB" id="Q24492"/>
<dbReference type="Reactome" id="R-DME-110312">
    <property type="pathway name" value="Translesion synthesis by REV1"/>
</dbReference>
<dbReference type="Reactome" id="R-DME-110314">
    <property type="pathway name" value="Recognition of DNA damage by PCNA-containing replication complex"/>
</dbReference>
<dbReference type="Reactome" id="R-DME-110320">
    <property type="pathway name" value="Translesion Synthesis by POLH"/>
</dbReference>
<dbReference type="Reactome" id="R-DME-176187">
    <property type="pathway name" value="Activation of ATR in response to replication stress"/>
</dbReference>
<dbReference type="Reactome" id="R-DME-3108214">
    <property type="pathway name" value="SUMOylation of DNA damage response and repair proteins"/>
</dbReference>
<dbReference type="Reactome" id="R-DME-3371453">
    <property type="pathway name" value="Regulation of HSF1-mediated heat shock response"/>
</dbReference>
<dbReference type="Reactome" id="R-DME-5358565">
    <property type="pathway name" value="Mismatch repair (MMR) directed by MSH2:MSH6 (MutSalpha)"/>
</dbReference>
<dbReference type="Reactome" id="R-DME-5651801">
    <property type="pathway name" value="PCNA-Dependent Long Patch Base Excision Repair"/>
</dbReference>
<dbReference type="Reactome" id="R-DME-5655862">
    <property type="pathway name" value="Translesion synthesis by POLK"/>
</dbReference>
<dbReference type="Reactome" id="R-DME-5656121">
    <property type="pathway name" value="Translesion synthesis by POLI"/>
</dbReference>
<dbReference type="Reactome" id="R-DME-5656169">
    <property type="pathway name" value="Termination of translesion DNA synthesis"/>
</dbReference>
<dbReference type="Reactome" id="R-DME-5693607">
    <property type="pathway name" value="Processing of DNA double-strand break ends"/>
</dbReference>
<dbReference type="Reactome" id="R-DME-5696395">
    <property type="pathway name" value="Formation of Incision Complex in GG-NER"/>
</dbReference>
<dbReference type="Reactome" id="R-DME-5696397">
    <property type="pathway name" value="Gap-filling DNA repair synthesis and ligation in GG-NER"/>
</dbReference>
<dbReference type="Reactome" id="R-DME-5696400">
    <property type="pathway name" value="Dual Incision in GG-NER"/>
</dbReference>
<dbReference type="Reactome" id="R-DME-6782135">
    <property type="pathway name" value="Dual incision in TC-NER"/>
</dbReference>
<dbReference type="Reactome" id="R-DME-6782210">
    <property type="pathway name" value="Gap-filling DNA repair synthesis and ligation in TC-NER"/>
</dbReference>
<dbReference type="Reactome" id="R-DME-6804756">
    <property type="pathway name" value="Regulation of TP53 Activity through Phosphorylation"/>
</dbReference>
<dbReference type="Reactome" id="R-DME-68962">
    <property type="pathway name" value="Activation of the pre-replicative complex"/>
</dbReference>
<dbReference type="Reactome" id="R-DME-69166">
    <property type="pathway name" value="Removal of the Flap Intermediate"/>
</dbReference>
<dbReference type="Reactome" id="R-DME-69473">
    <property type="pathway name" value="G2/M DNA damage checkpoint"/>
</dbReference>
<dbReference type="BioGRID-ORCS" id="40972">
    <property type="hits" value="0 hits in 1 CRISPR screen"/>
</dbReference>
<dbReference type="GenomeRNAi" id="40972"/>
<dbReference type="PRO" id="PR:Q24492"/>
<dbReference type="Proteomes" id="UP000000803">
    <property type="component" value="Chromosome 3R"/>
</dbReference>
<dbReference type="Bgee" id="FBgn0010173">
    <property type="expression patterns" value="Expressed in secondary oocyte and 131 other cell types or tissues"/>
</dbReference>
<dbReference type="ExpressionAtlas" id="Q24492">
    <property type="expression patterns" value="baseline and differential"/>
</dbReference>
<dbReference type="GO" id="GO:0005662">
    <property type="term" value="C:DNA replication factor A complex"/>
    <property type="evidence" value="ECO:0000314"/>
    <property type="project" value="FlyBase"/>
</dbReference>
<dbReference type="GO" id="GO:0005634">
    <property type="term" value="C:nucleus"/>
    <property type="evidence" value="ECO:0000314"/>
    <property type="project" value="FlyBase"/>
</dbReference>
<dbReference type="GO" id="GO:0003684">
    <property type="term" value="F:damaged DNA binding"/>
    <property type="evidence" value="ECO:0000318"/>
    <property type="project" value="GO_Central"/>
</dbReference>
<dbReference type="GO" id="GO:0003697">
    <property type="term" value="F:single-stranded DNA binding"/>
    <property type="evidence" value="ECO:0000314"/>
    <property type="project" value="FlyBase"/>
</dbReference>
<dbReference type="GO" id="GO:0043047">
    <property type="term" value="F:single-stranded telomeric DNA binding"/>
    <property type="evidence" value="ECO:0000318"/>
    <property type="project" value="GO_Central"/>
</dbReference>
<dbReference type="GO" id="GO:0008270">
    <property type="term" value="F:zinc ion binding"/>
    <property type="evidence" value="ECO:0007669"/>
    <property type="project" value="UniProtKB-KW"/>
</dbReference>
<dbReference type="GO" id="GO:0006260">
    <property type="term" value="P:DNA replication"/>
    <property type="evidence" value="ECO:0000250"/>
    <property type="project" value="UniProtKB"/>
</dbReference>
<dbReference type="GO" id="GO:0006261">
    <property type="term" value="P:DNA-templated DNA replication"/>
    <property type="evidence" value="ECO:0000314"/>
    <property type="project" value="FlyBase"/>
</dbReference>
<dbReference type="GO" id="GO:0000724">
    <property type="term" value="P:double-strand break repair via homologous recombination"/>
    <property type="evidence" value="ECO:0000318"/>
    <property type="project" value="GO_Central"/>
</dbReference>
<dbReference type="GO" id="GO:0051321">
    <property type="term" value="P:meiotic cell cycle"/>
    <property type="evidence" value="ECO:0000318"/>
    <property type="project" value="GO_Central"/>
</dbReference>
<dbReference type="GO" id="GO:0006289">
    <property type="term" value="P:nucleotide-excision repair"/>
    <property type="evidence" value="ECO:0000318"/>
    <property type="project" value="GO_Central"/>
</dbReference>
<dbReference type="GO" id="GO:0007004">
    <property type="term" value="P:telomere maintenance via telomerase"/>
    <property type="evidence" value="ECO:0000318"/>
    <property type="project" value="GO_Central"/>
</dbReference>
<dbReference type="CDD" id="cd04474">
    <property type="entry name" value="RPA1_DBD_A"/>
    <property type="match status" value="1"/>
</dbReference>
<dbReference type="CDD" id="cd04475">
    <property type="entry name" value="RPA1_DBD_B"/>
    <property type="match status" value="1"/>
</dbReference>
<dbReference type="CDD" id="cd04476">
    <property type="entry name" value="RPA1_DBD_C"/>
    <property type="match status" value="1"/>
</dbReference>
<dbReference type="CDD" id="cd04477">
    <property type="entry name" value="RPA1N"/>
    <property type="match status" value="1"/>
</dbReference>
<dbReference type="FunFam" id="2.40.50.140:FF:000041">
    <property type="entry name" value="Replication protein A subunit"/>
    <property type="match status" value="1"/>
</dbReference>
<dbReference type="FunFam" id="2.40.50.140:FF:000064">
    <property type="entry name" value="Replication protein A subunit"/>
    <property type="match status" value="1"/>
</dbReference>
<dbReference type="FunFam" id="2.40.50.140:FF:000090">
    <property type="entry name" value="Replication protein A subunit"/>
    <property type="match status" value="1"/>
</dbReference>
<dbReference type="FunFam" id="2.40.50.140:FF:000117">
    <property type="entry name" value="Replication protein A subunit"/>
    <property type="match status" value="1"/>
</dbReference>
<dbReference type="Gene3D" id="2.40.50.140">
    <property type="entry name" value="Nucleic acid-binding proteins"/>
    <property type="match status" value="4"/>
</dbReference>
<dbReference type="InterPro" id="IPR047192">
    <property type="entry name" value="Euk_RPA1_DBD_C"/>
</dbReference>
<dbReference type="InterPro" id="IPR012340">
    <property type="entry name" value="NA-bd_OB-fold"/>
</dbReference>
<dbReference type="InterPro" id="IPR004365">
    <property type="entry name" value="NA-bd_OB_tRNA"/>
</dbReference>
<dbReference type="InterPro" id="IPR013955">
    <property type="entry name" value="Rep_factor-A_C"/>
</dbReference>
<dbReference type="InterPro" id="IPR007199">
    <property type="entry name" value="Rep_factor-A_N"/>
</dbReference>
<dbReference type="InterPro" id="IPR031657">
    <property type="entry name" value="REPA_OB_2"/>
</dbReference>
<dbReference type="InterPro" id="IPR004591">
    <property type="entry name" value="Rfa1"/>
</dbReference>
<dbReference type="NCBIfam" id="TIGR00617">
    <property type="entry name" value="rpa1"/>
    <property type="match status" value="1"/>
</dbReference>
<dbReference type="PANTHER" id="PTHR47165">
    <property type="entry name" value="OS03G0429900 PROTEIN"/>
    <property type="match status" value="1"/>
</dbReference>
<dbReference type="PANTHER" id="PTHR47165:SF4">
    <property type="entry name" value="OS03G0429900 PROTEIN"/>
    <property type="match status" value="1"/>
</dbReference>
<dbReference type="Pfam" id="PF04057">
    <property type="entry name" value="Rep-A_N"/>
    <property type="match status" value="1"/>
</dbReference>
<dbReference type="Pfam" id="PF08646">
    <property type="entry name" value="Rep_fac-A_C"/>
    <property type="match status" value="1"/>
</dbReference>
<dbReference type="Pfam" id="PF16900">
    <property type="entry name" value="REPA_OB_2"/>
    <property type="match status" value="1"/>
</dbReference>
<dbReference type="Pfam" id="PF01336">
    <property type="entry name" value="tRNA_anti-codon"/>
    <property type="match status" value="1"/>
</dbReference>
<dbReference type="SUPFAM" id="SSF50249">
    <property type="entry name" value="Nucleic acid-binding proteins"/>
    <property type="match status" value="4"/>
</dbReference>
<name>RFA1_DROME</name>
<sequence>MVLASLSTGVIARIMHGEVVDAPVLQILAIKKINSAADSERYRILISDGKYFNSYAMLASQLNVMQHNGELEEFTIVQLDKYVTSLVGKDGAGKRVLIISELTVVNPGAEVKSKIGEPVTYENAAKQDLAPKPAVTSNSKPIAKKEPSHNNNNNIVMNSSINSGMTHPISSLSPYQNKWVIKARVTSKSGIRTWSNARGEGKLFSMDLMDESGEIRATAFKEQCDKFYDLIQVDSVYYISKCQLKPANKQYSSLNNAYEMTFSGETVVQLCEDTDDDPIPEIKYNLVPISDVSGMENKAAVDTIGICKEVGELQSFVARTTNKEFKKRDITLVDMSNSAISLTLWGDDAVNFDGHVQPVILVKGTRINEFNGGKSLSLGGGSIMKINPDIPEAHKLRGWFDNGGGDSVANMVSARTGGGSFSTEWMTLKDARARNLGSGDKPDYFQCKAVVHIVKQENAFYRACPQSDCNKKVVDEGNDQFRCEKCNALFPNFKYRLLINMSIGDWTSNRWVSSFNEVGEQLLGHTSQEVGEALENDPAKAEQIFSALNFTSHIFKLRCKNEVYGDMTRNKLTVQSVAPINHKEYNKHLLKELQELTGIGSSN</sequence>
<reference key="1">
    <citation type="submission" date="1996-06" db="EMBL/GenBank/DDBJ databases">
        <authorList>
            <person name="Perdigao J."/>
            <person name="Logarinho E."/>
            <person name="Avides C."/>
            <person name="Sunkel C.E."/>
        </authorList>
    </citation>
    <scope>NUCLEOTIDE SEQUENCE [MRNA]</scope>
    <source>
        <strain>Canton-S</strain>
        <tissue>Embryo</tissue>
    </source>
</reference>
<reference key="2">
    <citation type="journal article" date="2000" name="Science">
        <title>The genome sequence of Drosophila melanogaster.</title>
        <authorList>
            <person name="Adams M.D."/>
            <person name="Celniker S.E."/>
            <person name="Holt R.A."/>
            <person name="Evans C.A."/>
            <person name="Gocayne J.D."/>
            <person name="Amanatides P.G."/>
            <person name="Scherer S.E."/>
            <person name="Li P.W."/>
            <person name="Hoskins R.A."/>
            <person name="Galle R.F."/>
            <person name="George R.A."/>
            <person name="Lewis S.E."/>
            <person name="Richards S."/>
            <person name="Ashburner M."/>
            <person name="Henderson S.N."/>
            <person name="Sutton G.G."/>
            <person name="Wortman J.R."/>
            <person name="Yandell M.D."/>
            <person name="Zhang Q."/>
            <person name="Chen L.X."/>
            <person name="Brandon R.C."/>
            <person name="Rogers Y.-H.C."/>
            <person name="Blazej R.G."/>
            <person name="Champe M."/>
            <person name="Pfeiffer B.D."/>
            <person name="Wan K.H."/>
            <person name="Doyle C."/>
            <person name="Baxter E.G."/>
            <person name="Helt G."/>
            <person name="Nelson C.R."/>
            <person name="Miklos G.L.G."/>
            <person name="Abril J.F."/>
            <person name="Agbayani A."/>
            <person name="An H.-J."/>
            <person name="Andrews-Pfannkoch C."/>
            <person name="Baldwin D."/>
            <person name="Ballew R.M."/>
            <person name="Basu A."/>
            <person name="Baxendale J."/>
            <person name="Bayraktaroglu L."/>
            <person name="Beasley E.M."/>
            <person name="Beeson K.Y."/>
            <person name="Benos P.V."/>
            <person name="Berman B.P."/>
            <person name="Bhandari D."/>
            <person name="Bolshakov S."/>
            <person name="Borkova D."/>
            <person name="Botchan M.R."/>
            <person name="Bouck J."/>
            <person name="Brokstein P."/>
            <person name="Brottier P."/>
            <person name="Burtis K.C."/>
            <person name="Busam D.A."/>
            <person name="Butler H."/>
            <person name="Cadieu E."/>
            <person name="Center A."/>
            <person name="Chandra I."/>
            <person name="Cherry J.M."/>
            <person name="Cawley S."/>
            <person name="Dahlke C."/>
            <person name="Davenport L.B."/>
            <person name="Davies P."/>
            <person name="de Pablos B."/>
            <person name="Delcher A."/>
            <person name="Deng Z."/>
            <person name="Mays A.D."/>
            <person name="Dew I."/>
            <person name="Dietz S.M."/>
            <person name="Dodson K."/>
            <person name="Doup L.E."/>
            <person name="Downes M."/>
            <person name="Dugan-Rocha S."/>
            <person name="Dunkov B.C."/>
            <person name="Dunn P."/>
            <person name="Durbin K.J."/>
            <person name="Evangelista C.C."/>
            <person name="Ferraz C."/>
            <person name="Ferriera S."/>
            <person name="Fleischmann W."/>
            <person name="Fosler C."/>
            <person name="Gabrielian A.E."/>
            <person name="Garg N.S."/>
            <person name="Gelbart W.M."/>
            <person name="Glasser K."/>
            <person name="Glodek A."/>
            <person name="Gong F."/>
            <person name="Gorrell J.H."/>
            <person name="Gu Z."/>
            <person name="Guan P."/>
            <person name="Harris M."/>
            <person name="Harris N.L."/>
            <person name="Harvey D.A."/>
            <person name="Heiman T.J."/>
            <person name="Hernandez J.R."/>
            <person name="Houck J."/>
            <person name="Hostin D."/>
            <person name="Houston K.A."/>
            <person name="Howland T.J."/>
            <person name="Wei M.-H."/>
            <person name="Ibegwam C."/>
            <person name="Jalali M."/>
            <person name="Kalush F."/>
            <person name="Karpen G.H."/>
            <person name="Ke Z."/>
            <person name="Kennison J.A."/>
            <person name="Ketchum K.A."/>
            <person name="Kimmel B.E."/>
            <person name="Kodira C.D."/>
            <person name="Kraft C.L."/>
            <person name="Kravitz S."/>
            <person name="Kulp D."/>
            <person name="Lai Z."/>
            <person name="Lasko P."/>
            <person name="Lei Y."/>
            <person name="Levitsky A.A."/>
            <person name="Li J.H."/>
            <person name="Li Z."/>
            <person name="Liang Y."/>
            <person name="Lin X."/>
            <person name="Liu X."/>
            <person name="Mattei B."/>
            <person name="McIntosh T.C."/>
            <person name="McLeod M.P."/>
            <person name="McPherson D."/>
            <person name="Merkulov G."/>
            <person name="Milshina N.V."/>
            <person name="Mobarry C."/>
            <person name="Morris J."/>
            <person name="Moshrefi A."/>
            <person name="Mount S.M."/>
            <person name="Moy M."/>
            <person name="Murphy B."/>
            <person name="Murphy L."/>
            <person name="Muzny D.M."/>
            <person name="Nelson D.L."/>
            <person name="Nelson D.R."/>
            <person name="Nelson K.A."/>
            <person name="Nixon K."/>
            <person name="Nusskern D.R."/>
            <person name="Pacleb J.M."/>
            <person name="Palazzolo M."/>
            <person name="Pittman G.S."/>
            <person name="Pan S."/>
            <person name="Pollard J."/>
            <person name="Puri V."/>
            <person name="Reese M.G."/>
            <person name="Reinert K."/>
            <person name="Remington K."/>
            <person name="Saunders R.D.C."/>
            <person name="Scheeler F."/>
            <person name="Shen H."/>
            <person name="Shue B.C."/>
            <person name="Siden-Kiamos I."/>
            <person name="Simpson M."/>
            <person name="Skupski M.P."/>
            <person name="Smith T.J."/>
            <person name="Spier E."/>
            <person name="Spradling A.C."/>
            <person name="Stapleton M."/>
            <person name="Strong R."/>
            <person name="Sun E."/>
            <person name="Svirskas R."/>
            <person name="Tector C."/>
            <person name="Turner R."/>
            <person name="Venter E."/>
            <person name="Wang A.H."/>
            <person name="Wang X."/>
            <person name="Wang Z.-Y."/>
            <person name="Wassarman D.A."/>
            <person name="Weinstock G.M."/>
            <person name="Weissenbach J."/>
            <person name="Williams S.M."/>
            <person name="Woodage T."/>
            <person name="Worley K.C."/>
            <person name="Wu D."/>
            <person name="Yang S."/>
            <person name="Yao Q.A."/>
            <person name="Ye J."/>
            <person name="Yeh R.-F."/>
            <person name="Zaveri J.S."/>
            <person name="Zhan M."/>
            <person name="Zhang G."/>
            <person name="Zhao Q."/>
            <person name="Zheng L."/>
            <person name="Zheng X.H."/>
            <person name="Zhong F.N."/>
            <person name="Zhong W."/>
            <person name="Zhou X."/>
            <person name="Zhu S.C."/>
            <person name="Zhu X."/>
            <person name="Smith H.O."/>
            <person name="Gibbs R.A."/>
            <person name="Myers E.W."/>
            <person name="Rubin G.M."/>
            <person name="Venter J.C."/>
        </authorList>
    </citation>
    <scope>NUCLEOTIDE SEQUENCE [LARGE SCALE GENOMIC DNA]</scope>
    <source>
        <strain>Berkeley</strain>
    </source>
</reference>
<reference key="3">
    <citation type="journal article" date="2002" name="Genome Biol.">
        <title>Annotation of the Drosophila melanogaster euchromatic genome: a systematic review.</title>
        <authorList>
            <person name="Misra S."/>
            <person name="Crosby M.A."/>
            <person name="Mungall C.J."/>
            <person name="Matthews B.B."/>
            <person name="Campbell K.S."/>
            <person name="Hradecky P."/>
            <person name="Huang Y."/>
            <person name="Kaminker J.S."/>
            <person name="Millburn G.H."/>
            <person name="Prochnik S.E."/>
            <person name="Smith C.D."/>
            <person name="Tupy J.L."/>
            <person name="Whitfield E.J."/>
            <person name="Bayraktaroglu L."/>
            <person name="Berman B.P."/>
            <person name="Bettencourt B.R."/>
            <person name="Celniker S.E."/>
            <person name="de Grey A.D.N.J."/>
            <person name="Drysdale R.A."/>
            <person name="Harris N.L."/>
            <person name="Richter J."/>
            <person name="Russo S."/>
            <person name="Schroeder A.J."/>
            <person name="Shu S.Q."/>
            <person name="Stapleton M."/>
            <person name="Yamada C."/>
            <person name="Ashburner M."/>
            <person name="Gelbart W.M."/>
            <person name="Rubin G.M."/>
            <person name="Lewis S.E."/>
        </authorList>
    </citation>
    <scope>GENOME REANNOTATION</scope>
    <source>
        <strain>Berkeley</strain>
    </source>
</reference>
<reference key="4">
    <citation type="journal article" date="2002" name="Genome Biol.">
        <title>A Drosophila full-length cDNA resource.</title>
        <authorList>
            <person name="Stapleton M."/>
            <person name="Carlson J.W."/>
            <person name="Brokstein P."/>
            <person name="Yu C."/>
            <person name="Champe M."/>
            <person name="George R.A."/>
            <person name="Guarin H."/>
            <person name="Kronmiller B."/>
            <person name="Pacleb J.M."/>
            <person name="Park S."/>
            <person name="Wan K.H."/>
            <person name="Rubin G.M."/>
            <person name="Celniker S.E."/>
        </authorList>
    </citation>
    <scope>NUCLEOTIDE SEQUENCE [LARGE SCALE MRNA]</scope>
    <source>
        <strain>Berkeley</strain>
        <tissue>Embryo</tissue>
    </source>
</reference>
<reference key="5">
    <citation type="journal article" date="2008" name="J. Proteome Res.">
        <title>Phosphoproteome analysis of Drosophila melanogaster embryos.</title>
        <authorList>
            <person name="Zhai B."/>
            <person name="Villen J."/>
            <person name="Beausoleil S.A."/>
            <person name="Mintseris J."/>
            <person name="Gygi S.P."/>
        </authorList>
    </citation>
    <scope>PHOSPHORYLATION [LARGE SCALE ANALYSIS] AT SER-160 AND SER-420</scope>
    <scope>IDENTIFICATION BY MASS SPECTROMETRY</scope>
    <source>
        <tissue>Embryo</tissue>
    </source>
</reference>